<reference evidence="8" key="1">
    <citation type="journal article" date="2000" name="Mol. Cell">
        <title>The survivin-like C. elegans BIR-1 protein acts with the Aurora-like kinase AIR-2 to affect chromosomes and the spindle midzone.</title>
        <authorList>
            <person name="Speliotes E.K."/>
            <person name="Uren A."/>
            <person name="Vaux D."/>
            <person name="Horvitz H.R."/>
        </authorList>
    </citation>
    <scope>NUCLEOTIDE SEQUENCE [MRNA]</scope>
    <scope>FUNCTION</scope>
    <scope>SUBCELLULAR LOCATION</scope>
    <scope>TISSUE SPECIFICITY</scope>
    <scope>DEVELOPMENTAL STAGE</scope>
    <scope>DISRUPTION PHENOTYPE</scope>
</reference>
<reference evidence="9" key="2">
    <citation type="journal article" date="1998" name="Science">
        <title>Genome sequence of the nematode C. elegans: a platform for investigating biology.</title>
        <authorList>
            <consortium name="The C. elegans sequencing consortium"/>
        </authorList>
    </citation>
    <scope>NUCLEOTIDE SEQUENCE [LARGE SCALE GENOMIC DNA]</scope>
    <source>
        <strain evidence="9">Bristol N2</strain>
    </source>
</reference>
<reference evidence="7" key="3">
    <citation type="journal article" date="1999" name="Curr. Biol.">
        <title>Caenorhabditis elegans inhibitor of apoptosis protein (IAP) homologue BIR-1 plays a conserved role in cytokinesis.</title>
        <authorList>
            <person name="Fraser A.G."/>
            <person name="James C."/>
            <person name="Evan G.I."/>
            <person name="Hengartner M.O."/>
        </authorList>
    </citation>
    <scope>FUNCTION</scope>
    <scope>DEVELOPMENTAL STAGE</scope>
    <scope>DISRUPTION PHENOTYPE</scope>
</reference>
<reference evidence="7" key="4">
    <citation type="journal article" date="2003" name="J. Cell Biol.">
        <title>CSC-1: a subunit of the Aurora B kinase complex that binds to the survivin-like protein BIR-1 and the incenp-like protein ICP-1.</title>
        <authorList>
            <person name="Romano A."/>
            <person name="Guse A."/>
            <person name="Krascenicova I."/>
            <person name="Schnabel H."/>
            <person name="Schnabel R."/>
            <person name="Glotzer M."/>
        </authorList>
    </citation>
    <scope>FUNCTION</scope>
    <scope>IDENTIFICATION IN THE CHROMOSOMAL PASSENGER COMPLEX</scope>
    <scope>INTERACTION WITH CSC-1; ICP-1 AND AIR-2</scope>
    <scope>MUTAGENESIS OF CYS-83</scope>
</reference>
<reference evidence="7" key="5">
    <citation type="journal article" date="2003" name="Proc. Natl. Acad. Sci. U.S.A.">
        <title>BIR-1, a Caenorhabditis elegans homologue of Survivin, regulates transcription and development.</title>
        <authorList>
            <person name="Kostrouchova M."/>
            <person name="Kostrouch Z."/>
            <person name="Saudek V."/>
            <person name="Piatigorsky J."/>
            <person name="Rall J.E."/>
        </authorList>
    </citation>
    <scope>FUNCTION</scope>
    <scope>DISRUPTION PHENOTYPE</scope>
</reference>
<reference evidence="7" key="6">
    <citation type="journal article" date="2006" name="Folia Biol. (Praha)">
        <title>BIR-1, the homologue of human Survivin, regulates expression of developmentally active collagen genes in C. elegans.</title>
        <authorList>
            <person name="Liby P."/>
            <person name="Pohludka M."/>
            <person name="Vohanka J."/>
            <person name="Kostrouchova M."/>
            <person name="Kostrouch D."/>
            <person name="Kostrouchova M."/>
            <person name="Rall J.E."/>
            <person name="Kostrouch Z."/>
        </authorList>
    </citation>
    <scope>FUNCTION</scope>
    <scope>DISRUPTION PHENOTYPE</scope>
</reference>
<keyword id="KW-0131">Cell cycle</keyword>
<keyword id="KW-0132">Cell division</keyword>
<keyword id="KW-0158">Chromosome</keyword>
<keyword id="KW-0159">Chromosome partition</keyword>
<keyword id="KW-0963">Cytoplasm</keyword>
<keyword id="KW-0206">Cytoskeleton</keyword>
<keyword id="KW-0469">Meiosis</keyword>
<keyword id="KW-0479">Metal-binding</keyword>
<keyword id="KW-0498">Mitosis</keyword>
<keyword id="KW-1185">Reference proteome</keyword>
<keyword id="KW-0862">Zinc</keyword>
<evidence type="ECO:0000255" key="1">
    <source>
        <dbReference type="PROSITE-ProRule" id="PRU00029"/>
    </source>
</evidence>
<evidence type="ECO:0000269" key="2">
    <source>
    </source>
</evidence>
<evidence type="ECO:0000269" key="3">
    <source>
    </source>
</evidence>
<evidence type="ECO:0000269" key="4">
    <source>
    </source>
</evidence>
<evidence type="ECO:0000269" key="5">
    <source>
    </source>
</evidence>
<evidence type="ECO:0000269" key="6">
    <source>
    </source>
</evidence>
<evidence type="ECO:0000305" key="7"/>
<evidence type="ECO:0000312" key="8">
    <source>
        <dbReference type="EMBL" id="AAB94330.1"/>
    </source>
</evidence>
<evidence type="ECO:0000312" key="9">
    <source>
        <dbReference type="Proteomes" id="UP000001940"/>
    </source>
</evidence>
<evidence type="ECO:0000312" key="10">
    <source>
        <dbReference type="WormBase" id="T27F2.3"/>
    </source>
</evidence>
<feature type="chain" id="PRO_0000441160" description="Chromosomal passenger complex protein bir-1">
    <location>
        <begin position="1"/>
        <end position="155"/>
    </location>
</feature>
<feature type="repeat" description="BIR" evidence="1">
    <location>
        <begin position="20"/>
        <end position="87"/>
    </location>
</feature>
<feature type="binding site" evidence="1">
    <location>
        <position position="57"/>
    </location>
    <ligand>
        <name>Zn(2+)</name>
        <dbReference type="ChEBI" id="CHEBI:29105"/>
    </ligand>
</feature>
<feature type="binding site" evidence="1">
    <location>
        <position position="60"/>
    </location>
    <ligand>
        <name>Zn(2+)</name>
        <dbReference type="ChEBI" id="CHEBI:29105"/>
    </ligand>
</feature>
<feature type="binding site" evidence="1">
    <location>
        <position position="76"/>
    </location>
    <ligand>
        <name>Zn(2+)</name>
        <dbReference type="ChEBI" id="CHEBI:29105"/>
    </ligand>
</feature>
<feature type="binding site" evidence="1">
    <location>
        <position position="83"/>
    </location>
    <ligand>
        <name>Zn(2+)</name>
        <dbReference type="ChEBI" id="CHEBI:29105"/>
    </ligand>
</feature>
<feature type="mutagenesis site" description="Abolishes the interaction with csc-1." evidence="5">
    <original>C</original>
    <variation>A</variation>
    <location>
        <position position="83"/>
    </location>
</feature>
<accession>G5EFA2</accession>
<organism evidence="9">
    <name type="scientific">Caenorhabditis elegans</name>
    <dbReference type="NCBI Taxonomy" id="6239"/>
    <lineage>
        <taxon>Eukaryota</taxon>
        <taxon>Metazoa</taxon>
        <taxon>Ecdysozoa</taxon>
        <taxon>Nematoda</taxon>
        <taxon>Chromadorea</taxon>
        <taxon>Rhabditida</taxon>
        <taxon>Rhabditina</taxon>
        <taxon>Rhabditomorpha</taxon>
        <taxon>Rhabditoidea</taxon>
        <taxon>Rhabditidae</taxon>
        <taxon>Peloderinae</taxon>
        <taxon>Caenorhabditis</taxon>
    </lineage>
</organism>
<proteinExistence type="evidence at protein level"/>
<comment type="function">
    <text evidence="2 3 4 5 6">Component of the chromosomal passenger complex (CPC), a complex that acts as a key regulator of chromosome segregation and cytokinesis (PubMed:10209096, PubMed:10983970, PubMed:12707312). The CPC complex has essential functions at the centromere in ensuring correct chromosome condensation, alignment and segregation (PubMed:10983970, PubMed:12707312). In the complex, required to direct the Aurora B/air-2 kinase to chromosomes (PubMed:10983970, PubMed:12707312). Also functions in spindle midzone formation and in the formation of polar bodies during oogenesis (PubMed:10209096, PubMed:10983970). Required for the localization of the kinetochore component hcp-1 to chromosomes (PubMed:10983970). Involved in the positive regulation of transcription (PubMed:12682297). Involved in the transcriptional regulation of collagen genes (PubMed:17116281).</text>
</comment>
<comment type="subunit">
    <text evidence="5">Component of the CPC complex which consists of icp-1; csc-1; bir-1 and air-2. Within the complex, interacts with csc-1, icp-1 and air-2. Interacts with csc-1 in a zinc-dependent-manner; the interaction is direct.</text>
</comment>
<comment type="subcellular location">
    <subcellularLocation>
        <location evidence="3">Chromosome</location>
    </subcellularLocation>
    <subcellularLocation>
        <location evidence="3">Cytoplasm</location>
        <location evidence="3">Cytoskeleton</location>
        <location evidence="3">Spindle</location>
    </subcellularLocation>
    <subcellularLocation>
        <location evidence="3">Midbody</location>
    </subcellularLocation>
    <text evidence="3">In mitosis and meiosis, localizes to chromosomes during prometaphase and metaphase, localizes to both chromosomes and the spindle midzone during anaphase and disappears from chromosomes during telophase but remains at the spindle midzone. Persists at the cytokinetic remnant during cytokinesis. Also localizes to the chromosome of polar bodies during oogenesis.</text>
</comment>
<comment type="tissue specificity">
    <text evidence="3">Expressed in oocytes and sperm.</text>
</comment>
<comment type="developmental stage">
    <text evidence="2 3">Expressed throughout development and in adult animals, with high expression in embryos and in dividing cells (at protein level).</text>
</comment>
<comment type="disruption phenotype">
    <text evidence="2 3 4 6">RNAi-mediated knockdown results in high embryonic lethality (PubMed:10209096). Causes a failure in cytokinesis resulting in a lack of cellularization and in polyploidy (PubMed:10209096, PubMed:10983970). Defective extrusion of the polar body during oogenesis (PubMed:10209096, PubMed:10983970). Defects in chromosome condensation, compromised alignment and segregation of paired homologs and defects in spindle midzone formation during meiosis and mitosis (PubMed:10983970). Disruption of air-2 and hcp-1 localization to chromosomes (PubMed:10983970). Decreased phosphorylation of histone H3 'Ser-10' and decreased acetylation of histone H3 'Lys-14' and 'Lys-9' (PubMed:10983970, PubMed:12682297). Surviving animals exhibit a shorter and stouter body morphology, slow uncoordinated movements, are egg-laying defective, have abnormal germ line growth and exhibit protruding vulvas (PubMed:12682297). Decrease in the transcription of several genes including collagen genes (PubMed:12682297, PubMed:17116281).</text>
</comment>
<comment type="similarity">
    <text evidence="7">Belongs to the IAP family.</text>
</comment>
<gene>
    <name evidence="10" type="primary">bir-1</name>
    <name evidence="10" type="ORF">T27F2.3</name>
</gene>
<dbReference type="EMBL" id="U85911">
    <property type="protein sequence ID" value="AAB94330.1"/>
    <property type="molecule type" value="mRNA"/>
</dbReference>
<dbReference type="EMBL" id="BX284605">
    <property type="protein sequence ID" value="CAA98553.1"/>
    <property type="molecule type" value="Genomic_DNA"/>
</dbReference>
<dbReference type="PIR" id="T37471">
    <property type="entry name" value="T37471"/>
</dbReference>
<dbReference type="RefSeq" id="NP_505949.1">
    <property type="nucleotide sequence ID" value="NM_073548.10"/>
</dbReference>
<dbReference type="SMR" id="G5EFA2"/>
<dbReference type="ComplexPortal" id="CPX-3461">
    <property type="entry name" value="Chromosomal passenger complex"/>
</dbReference>
<dbReference type="FunCoup" id="G5EFA2">
    <property type="interactions" value="714"/>
</dbReference>
<dbReference type="IntAct" id="G5EFA2">
    <property type="interactions" value="12"/>
</dbReference>
<dbReference type="STRING" id="6239.T27F2.3.1"/>
<dbReference type="PaxDb" id="6239-T27F2.3.2"/>
<dbReference type="PeptideAtlas" id="G5EFA2"/>
<dbReference type="EnsemblMetazoa" id="T27F2.3.1">
    <property type="protein sequence ID" value="T27F2.3.1"/>
    <property type="gene ID" value="WBGene00000249"/>
</dbReference>
<dbReference type="EnsemblMetazoa" id="T27F2.3.2">
    <property type="protein sequence ID" value="T27F2.3.2"/>
    <property type="gene ID" value="WBGene00000249"/>
</dbReference>
<dbReference type="GeneID" id="179597"/>
<dbReference type="KEGG" id="cel:CELE_T27F2.3"/>
<dbReference type="AGR" id="WB:WBGene00000249"/>
<dbReference type="CTD" id="179597"/>
<dbReference type="WormBase" id="T27F2.3">
    <property type="protein sequence ID" value="CE06521"/>
    <property type="gene ID" value="WBGene00000249"/>
    <property type="gene designation" value="bir-1"/>
</dbReference>
<dbReference type="eggNOG" id="KOG1101">
    <property type="taxonomic scope" value="Eukaryota"/>
</dbReference>
<dbReference type="HOGENOM" id="CLU_016347_0_3_1"/>
<dbReference type="InParanoid" id="G5EFA2"/>
<dbReference type="OMA" id="EHEMMIN"/>
<dbReference type="OrthoDB" id="2196114at2759"/>
<dbReference type="PhylomeDB" id="G5EFA2"/>
<dbReference type="SignaLink" id="G5EFA2"/>
<dbReference type="PRO" id="PR:G5EFA2"/>
<dbReference type="Proteomes" id="UP000001940">
    <property type="component" value="Chromosome V"/>
</dbReference>
<dbReference type="Bgee" id="WBGene00000249">
    <property type="expression patterns" value="Expressed in embryo and 4 other cell types or tissues"/>
</dbReference>
<dbReference type="GO" id="GO:0032133">
    <property type="term" value="C:chromosome passenger complex"/>
    <property type="evidence" value="ECO:0000353"/>
    <property type="project" value="ComplexPortal"/>
</dbReference>
<dbReference type="GO" id="GO:0000793">
    <property type="term" value="C:condensed chromosome"/>
    <property type="evidence" value="ECO:0000314"/>
    <property type="project" value="WormBase"/>
</dbReference>
<dbReference type="GO" id="GO:0005737">
    <property type="term" value="C:cytoplasm"/>
    <property type="evidence" value="ECO:0000318"/>
    <property type="project" value="GO_Central"/>
</dbReference>
<dbReference type="GO" id="GO:0000776">
    <property type="term" value="C:kinetochore"/>
    <property type="evidence" value="ECO:0000318"/>
    <property type="project" value="GO_Central"/>
</dbReference>
<dbReference type="GO" id="GO:0015630">
    <property type="term" value="C:microtubule cytoskeleton"/>
    <property type="evidence" value="ECO:0000314"/>
    <property type="project" value="ComplexPortal"/>
</dbReference>
<dbReference type="GO" id="GO:0030496">
    <property type="term" value="C:midbody"/>
    <property type="evidence" value="ECO:0007669"/>
    <property type="project" value="UniProtKB-SubCell"/>
</dbReference>
<dbReference type="GO" id="GO:0051233">
    <property type="term" value="C:spindle midzone"/>
    <property type="evidence" value="ECO:0000314"/>
    <property type="project" value="WormBase"/>
</dbReference>
<dbReference type="GO" id="GO:0046872">
    <property type="term" value="F:metal ion binding"/>
    <property type="evidence" value="ECO:0007669"/>
    <property type="project" value="UniProtKB-KW"/>
</dbReference>
<dbReference type="GO" id="GO:0030261">
    <property type="term" value="P:chromosome condensation"/>
    <property type="evidence" value="ECO:0000315"/>
    <property type="project" value="WormBase"/>
</dbReference>
<dbReference type="GO" id="GO:0007059">
    <property type="term" value="P:chromosome segregation"/>
    <property type="evidence" value="ECO:0000315"/>
    <property type="project" value="WormBase"/>
</dbReference>
<dbReference type="GO" id="GO:0018991">
    <property type="term" value="P:egg-laying behavior"/>
    <property type="evidence" value="ECO:0000315"/>
    <property type="project" value="WormBase"/>
</dbReference>
<dbReference type="GO" id="GO:0040039">
    <property type="term" value="P:inductive cell migration"/>
    <property type="evidence" value="ECO:0000315"/>
    <property type="project" value="WormBase"/>
</dbReference>
<dbReference type="GO" id="GO:0051321">
    <property type="term" value="P:meiotic cell cycle"/>
    <property type="evidence" value="ECO:0007669"/>
    <property type="project" value="UniProtKB-KW"/>
</dbReference>
<dbReference type="GO" id="GO:0000278">
    <property type="term" value="P:mitotic cell cycle"/>
    <property type="evidence" value="ECO:0000303"/>
    <property type="project" value="ComplexPortal"/>
</dbReference>
<dbReference type="GO" id="GO:0000281">
    <property type="term" value="P:mitotic cytokinesis"/>
    <property type="evidence" value="ECO:0000318"/>
    <property type="project" value="GO_Central"/>
</dbReference>
<dbReference type="GO" id="GO:0051256">
    <property type="term" value="P:mitotic spindle midzone assembly"/>
    <property type="evidence" value="ECO:0000315"/>
    <property type="project" value="WormBase"/>
</dbReference>
<dbReference type="GO" id="GO:0007052">
    <property type="term" value="P:mitotic spindle organization"/>
    <property type="evidence" value="ECO:0000318"/>
    <property type="project" value="GO_Central"/>
</dbReference>
<dbReference type="GO" id="GO:0043066">
    <property type="term" value="P:negative regulation of apoptotic process"/>
    <property type="evidence" value="ECO:0000318"/>
    <property type="project" value="GO_Central"/>
</dbReference>
<dbReference type="GO" id="GO:0090267">
    <property type="term" value="P:positive regulation of mitotic cell cycle spindle assembly checkpoint"/>
    <property type="evidence" value="ECO:0000303"/>
    <property type="project" value="ComplexPortal"/>
</dbReference>
<dbReference type="GO" id="GO:1901970">
    <property type="term" value="P:positive regulation of mitotic sister chromatid separation"/>
    <property type="evidence" value="ECO:0000303"/>
    <property type="project" value="ComplexPortal"/>
</dbReference>
<dbReference type="GO" id="GO:0040014">
    <property type="term" value="P:regulation of multicellular organism growth"/>
    <property type="evidence" value="ECO:0000315"/>
    <property type="project" value="WormBase"/>
</dbReference>
<dbReference type="GO" id="GO:0006357">
    <property type="term" value="P:regulation of transcription by RNA polymerase II"/>
    <property type="evidence" value="ECO:0000314"/>
    <property type="project" value="WormBase"/>
</dbReference>
<dbReference type="CDD" id="cd00022">
    <property type="entry name" value="BIR"/>
    <property type="match status" value="1"/>
</dbReference>
<dbReference type="Gene3D" id="1.10.1170.10">
    <property type="entry name" value="Inhibitor Of Apoptosis Protein (2mihbC-IAP-1), Chain A"/>
    <property type="match status" value="1"/>
</dbReference>
<dbReference type="InterPro" id="IPR051190">
    <property type="entry name" value="Baculoviral_IAP"/>
</dbReference>
<dbReference type="InterPro" id="IPR001370">
    <property type="entry name" value="BIR_rpt"/>
</dbReference>
<dbReference type="PANTHER" id="PTHR46771">
    <property type="entry name" value="DETERIN"/>
    <property type="match status" value="1"/>
</dbReference>
<dbReference type="PANTHER" id="PTHR46771:SF5">
    <property type="entry name" value="DETERIN"/>
    <property type="match status" value="1"/>
</dbReference>
<dbReference type="Pfam" id="PF00653">
    <property type="entry name" value="BIR"/>
    <property type="match status" value="1"/>
</dbReference>
<dbReference type="SMART" id="SM00238">
    <property type="entry name" value="BIR"/>
    <property type="match status" value="1"/>
</dbReference>
<dbReference type="SUPFAM" id="SSF57924">
    <property type="entry name" value="Inhibitor of apoptosis (IAP) repeat"/>
    <property type="match status" value="1"/>
</dbReference>
<dbReference type="PROSITE" id="PS50143">
    <property type="entry name" value="BIR_REPEAT_2"/>
    <property type="match status" value="1"/>
</dbReference>
<protein>
    <recommendedName>
        <fullName evidence="7">Chromosomal passenger complex protein bir-1</fullName>
    </recommendedName>
    <alternativeName>
        <fullName evidence="7">Baculoviral IAP repeat-containing protein bir-1</fullName>
    </alternativeName>
</protein>
<name>BIR1_CAEEL</name>
<sequence length="155" mass="17720">MAPGTKKKSDMAKFTFYKDRLMTFKNFEYDRDPDAKCTSQAVAQAGFYCTGPQSGKCAFCNKELDFDPEDDPWYEHTKRDEPCEFVRIGKLDDSELTINDTVRLSQTAMIMTKLFEHEMMINNLSNHSSSDALFDQLKKVPNTASTTKSNSRRGK</sequence>